<dbReference type="EMBL" id="CP000151">
    <property type="protein sequence ID" value="ABB08922.1"/>
    <property type="molecule type" value="Genomic_DNA"/>
</dbReference>
<dbReference type="RefSeq" id="WP_011352460.1">
    <property type="nucleotide sequence ID" value="NC_007510.1"/>
</dbReference>
<dbReference type="SMR" id="Q39F44"/>
<dbReference type="GeneID" id="45095204"/>
<dbReference type="KEGG" id="bur:Bcep18194_A5328"/>
<dbReference type="PATRIC" id="fig|482957.22.peg.2277"/>
<dbReference type="HOGENOM" id="CLU_047155_0_2_4"/>
<dbReference type="Proteomes" id="UP000002705">
    <property type="component" value="Chromosome 1"/>
</dbReference>
<dbReference type="GO" id="GO:0005737">
    <property type="term" value="C:cytoplasm"/>
    <property type="evidence" value="ECO:0007669"/>
    <property type="project" value="UniProtKB-SubCell"/>
</dbReference>
<dbReference type="GO" id="GO:0003746">
    <property type="term" value="F:translation elongation factor activity"/>
    <property type="evidence" value="ECO:0007669"/>
    <property type="project" value="UniProtKB-UniRule"/>
</dbReference>
<dbReference type="CDD" id="cd14275">
    <property type="entry name" value="UBA_EF-Ts"/>
    <property type="match status" value="1"/>
</dbReference>
<dbReference type="FunFam" id="1.10.286.20:FF:000001">
    <property type="entry name" value="Elongation factor Ts"/>
    <property type="match status" value="1"/>
</dbReference>
<dbReference type="FunFam" id="1.10.8.10:FF:000001">
    <property type="entry name" value="Elongation factor Ts"/>
    <property type="match status" value="1"/>
</dbReference>
<dbReference type="Gene3D" id="1.10.286.20">
    <property type="match status" value="1"/>
</dbReference>
<dbReference type="Gene3D" id="1.10.8.10">
    <property type="entry name" value="DNA helicase RuvA subunit, C-terminal domain"/>
    <property type="match status" value="1"/>
</dbReference>
<dbReference type="Gene3D" id="3.30.479.20">
    <property type="entry name" value="Elongation factor Ts, dimerisation domain"/>
    <property type="match status" value="2"/>
</dbReference>
<dbReference type="HAMAP" id="MF_00050">
    <property type="entry name" value="EF_Ts"/>
    <property type="match status" value="1"/>
</dbReference>
<dbReference type="InterPro" id="IPR036402">
    <property type="entry name" value="EF-Ts_dimer_sf"/>
</dbReference>
<dbReference type="InterPro" id="IPR001816">
    <property type="entry name" value="Transl_elong_EFTs/EF1B"/>
</dbReference>
<dbReference type="InterPro" id="IPR014039">
    <property type="entry name" value="Transl_elong_EFTs/EF1B_dimer"/>
</dbReference>
<dbReference type="InterPro" id="IPR018101">
    <property type="entry name" value="Transl_elong_Ts_CS"/>
</dbReference>
<dbReference type="InterPro" id="IPR009060">
    <property type="entry name" value="UBA-like_sf"/>
</dbReference>
<dbReference type="NCBIfam" id="TIGR00116">
    <property type="entry name" value="tsf"/>
    <property type="match status" value="1"/>
</dbReference>
<dbReference type="PANTHER" id="PTHR11741">
    <property type="entry name" value="ELONGATION FACTOR TS"/>
    <property type="match status" value="1"/>
</dbReference>
<dbReference type="PANTHER" id="PTHR11741:SF0">
    <property type="entry name" value="ELONGATION FACTOR TS, MITOCHONDRIAL"/>
    <property type="match status" value="1"/>
</dbReference>
<dbReference type="Pfam" id="PF00889">
    <property type="entry name" value="EF_TS"/>
    <property type="match status" value="1"/>
</dbReference>
<dbReference type="SUPFAM" id="SSF54713">
    <property type="entry name" value="Elongation factor Ts (EF-Ts), dimerisation domain"/>
    <property type="match status" value="2"/>
</dbReference>
<dbReference type="SUPFAM" id="SSF46934">
    <property type="entry name" value="UBA-like"/>
    <property type="match status" value="1"/>
</dbReference>
<dbReference type="PROSITE" id="PS01127">
    <property type="entry name" value="EF_TS_2"/>
    <property type="match status" value="1"/>
</dbReference>
<feature type="chain" id="PRO_0000241468" description="Elongation factor Ts">
    <location>
        <begin position="1"/>
        <end position="293"/>
    </location>
</feature>
<feature type="region of interest" description="Involved in Mg(2+) ion dislocation from EF-Tu" evidence="1">
    <location>
        <begin position="80"/>
        <end position="83"/>
    </location>
</feature>
<gene>
    <name evidence="1" type="primary">tsf</name>
    <name type="ordered locus">Bcep18194_A5328</name>
</gene>
<evidence type="ECO:0000255" key="1">
    <source>
        <dbReference type="HAMAP-Rule" id="MF_00050"/>
    </source>
</evidence>
<protein>
    <recommendedName>
        <fullName evidence="1">Elongation factor Ts</fullName>
        <shortName evidence="1">EF-Ts</shortName>
    </recommendedName>
</protein>
<name>EFTS_BURL3</name>
<accession>Q39F44</accession>
<comment type="function">
    <text evidence="1">Associates with the EF-Tu.GDP complex and induces the exchange of GDP to GTP. It remains bound to the aminoacyl-tRNA.EF-Tu.GTP complex up to the GTP hydrolysis stage on the ribosome.</text>
</comment>
<comment type="subcellular location">
    <subcellularLocation>
        <location evidence="1">Cytoplasm</location>
    </subcellularLocation>
</comment>
<comment type="similarity">
    <text evidence="1">Belongs to the EF-Ts family.</text>
</comment>
<organism>
    <name type="scientific">Burkholderia lata (strain ATCC 17760 / DSM 23089 / LMG 22485 / NCIMB 9086 / R18194 / 383)</name>
    <dbReference type="NCBI Taxonomy" id="482957"/>
    <lineage>
        <taxon>Bacteria</taxon>
        <taxon>Pseudomonadati</taxon>
        <taxon>Pseudomonadota</taxon>
        <taxon>Betaproteobacteria</taxon>
        <taxon>Burkholderiales</taxon>
        <taxon>Burkholderiaceae</taxon>
        <taxon>Burkholderia</taxon>
        <taxon>Burkholderia cepacia complex</taxon>
    </lineage>
</organism>
<reference key="1">
    <citation type="submission" date="2005-10" db="EMBL/GenBank/DDBJ databases">
        <title>Complete sequence of chromosome 1 of Burkholderia sp. 383.</title>
        <authorList>
            <consortium name="US DOE Joint Genome Institute"/>
            <person name="Copeland A."/>
            <person name="Lucas S."/>
            <person name="Lapidus A."/>
            <person name="Barry K."/>
            <person name="Detter J.C."/>
            <person name="Glavina T."/>
            <person name="Hammon N."/>
            <person name="Israni S."/>
            <person name="Pitluck S."/>
            <person name="Chain P."/>
            <person name="Malfatti S."/>
            <person name="Shin M."/>
            <person name="Vergez L."/>
            <person name="Schmutz J."/>
            <person name="Larimer F."/>
            <person name="Land M."/>
            <person name="Kyrpides N."/>
            <person name="Lykidis A."/>
            <person name="Richardson P."/>
        </authorList>
    </citation>
    <scope>NUCLEOTIDE SEQUENCE [LARGE SCALE GENOMIC DNA]</scope>
    <source>
        <strain>ATCC 17760 / DSM 23089 / LMG 22485 / NCIMB 9086 / R18194 / 383</strain>
    </source>
</reference>
<keyword id="KW-0963">Cytoplasm</keyword>
<keyword id="KW-0251">Elongation factor</keyword>
<keyword id="KW-0648">Protein biosynthesis</keyword>
<sequence>MAAITASMVAELRAKTDAPMMECKKALTEADGDLAKAEELLRVKLGNKASKAASRVTAEGVVASFVGGNAGSLVELNCETDFVAKNDDFLAFSKTVAELVATQNPADVAALSALPLEGSTVDAVRLALVGKIGENVSIRRFVRFETANKIATYLHGARIGVIVEYTGAEEQVGKDVAMHIAAMKPVALSSADVPAELIDTERRVAEQKAAESGKPAEIVAKMVDGSVQKYLKEVSLLNQTFVKNDKQTIEQMLKAANAAVQKFALFVVGEGIEKRQDDFAAEVAAQVAAAKQQ</sequence>
<proteinExistence type="inferred from homology"/>